<sequence length="135" mass="14639">MDSEESRCFSGYDGNRFKLVILASQRAHELSSGAATLVDRQGDKNTVVALREIASNQLDLSTVFGLAVQRCRKYLEEFAGSRGIAGHSSHVSPSRSSRHTGLGKSFVDNKSTYSASFLDQDKFLSGGKDDGIEGF</sequence>
<reference key="1">
    <citation type="journal article" date="2006" name="PLoS Genet.">
        <title>Comparative genomics of emerging human ehrlichiosis agents.</title>
        <authorList>
            <person name="Dunning Hotopp J.C."/>
            <person name="Lin M."/>
            <person name="Madupu R."/>
            <person name="Crabtree J."/>
            <person name="Angiuoli S.V."/>
            <person name="Eisen J.A."/>
            <person name="Seshadri R."/>
            <person name="Ren Q."/>
            <person name="Wu M."/>
            <person name="Utterback T.R."/>
            <person name="Smith S."/>
            <person name="Lewis M."/>
            <person name="Khouri H."/>
            <person name="Zhang C."/>
            <person name="Niu H."/>
            <person name="Lin Q."/>
            <person name="Ohashi N."/>
            <person name="Zhi N."/>
            <person name="Nelson W.C."/>
            <person name="Brinkac L.M."/>
            <person name="Dodson R.J."/>
            <person name="Rosovitz M.J."/>
            <person name="Sundaram J.P."/>
            <person name="Daugherty S.C."/>
            <person name="Davidsen T."/>
            <person name="Durkin A.S."/>
            <person name="Gwinn M.L."/>
            <person name="Haft D.H."/>
            <person name="Selengut J.D."/>
            <person name="Sullivan S.A."/>
            <person name="Zafar N."/>
            <person name="Zhou L."/>
            <person name="Benahmed F."/>
            <person name="Forberger H."/>
            <person name="Halpin R."/>
            <person name="Mulligan S."/>
            <person name="Robinson J."/>
            <person name="White O."/>
            <person name="Rikihisa Y."/>
            <person name="Tettelin H."/>
        </authorList>
    </citation>
    <scope>NUCLEOTIDE SEQUENCE [LARGE SCALE GENOMIC DNA]</scope>
    <source>
        <strain>HZ</strain>
    </source>
</reference>
<name>RPOZ_ANAPZ</name>
<dbReference type="EC" id="2.7.7.6" evidence="1"/>
<dbReference type="EMBL" id="CP000235">
    <property type="protein sequence ID" value="ABD44058.1"/>
    <property type="molecule type" value="Genomic_DNA"/>
</dbReference>
<dbReference type="RefSeq" id="WP_011450631.1">
    <property type="nucleotide sequence ID" value="NC_007797.1"/>
</dbReference>
<dbReference type="SMR" id="Q2GKJ2"/>
<dbReference type="STRING" id="212042.APH_0514"/>
<dbReference type="PaxDb" id="212042-APH_0514"/>
<dbReference type="EnsemblBacteria" id="ABD44058">
    <property type="protein sequence ID" value="ABD44058"/>
    <property type="gene ID" value="APH_0514"/>
</dbReference>
<dbReference type="GeneID" id="92748349"/>
<dbReference type="KEGG" id="aph:APH_0514"/>
<dbReference type="eggNOG" id="COG1758">
    <property type="taxonomic scope" value="Bacteria"/>
</dbReference>
<dbReference type="HOGENOM" id="CLU_125406_2_1_5"/>
<dbReference type="Proteomes" id="UP000001943">
    <property type="component" value="Chromosome"/>
</dbReference>
<dbReference type="GO" id="GO:0000428">
    <property type="term" value="C:DNA-directed RNA polymerase complex"/>
    <property type="evidence" value="ECO:0007669"/>
    <property type="project" value="UniProtKB-KW"/>
</dbReference>
<dbReference type="GO" id="GO:0003677">
    <property type="term" value="F:DNA binding"/>
    <property type="evidence" value="ECO:0007669"/>
    <property type="project" value="UniProtKB-UniRule"/>
</dbReference>
<dbReference type="GO" id="GO:0003899">
    <property type="term" value="F:DNA-directed RNA polymerase activity"/>
    <property type="evidence" value="ECO:0007669"/>
    <property type="project" value="UniProtKB-UniRule"/>
</dbReference>
<dbReference type="GO" id="GO:0006351">
    <property type="term" value="P:DNA-templated transcription"/>
    <property type="evidence" value="ECO:0007669"/>
    <property type="project" value="UniProtKB-UniRule"/>
</dbReference>
<dbReference type="Gene3D" id="3.90.940.10">
    <property type="match status" value="1"/>
</dbReference>
<dbReference type="HAMAP" id="MF_00366">
    <property type="entry name" value="RNApol_bact_RpoZ"/>
    <property type="match status" value="1"/>
</dbReference>
<dbReference type="InterPro" id="IPR003716">
    <property type="entry name" value="DNA-dir_RNA_pol_omega"/>
</dbReference>
<dbReference type="InterPro" id="IPR006110">
    <property type="entry name" value="Pol_omega/Rpo6/RPB6"/>
</dbReference>
<dbReference type="InterPro" id="IPR036161">
    <property type="entry name" value="RPB6/omega-like_sf"/>
</dbReference>
<dbReference type="NCBIfam" id="TIGR00690">
    <property type="entry name" value="rpoZ"/>
    <property type="match status" value="1"/>
</dbReference>
<dbReference type="PANTHER" id="PTHR34476">
    <property type="entry name" value="DNA-DIRECTED RNA POLYMERASE SUBUNIT OMEGA"/>
    <property type="match status" value="1"/>
</dbReference>
<dbReference type="PANTHER" id="PTHR34476:SF1">
    <property type="entry name" value="DNA-DIRECTED RNA POLYMERASE SUBUNIT OMEGA"/>
    <property type="match status" value="1"/>
</dbReference>
<dbReference type="Pfam" id="PF01192">
    <property type="entry name" value="RNA_pol_Rpb6"/>
    <property type="match status" value="1"/>
</dbReference>
<dbReference type="SMART" id="SM01409">
    <property type="entry name" value="RNA_pol_Rpb6"/>
    <property type="match status" value="1"/>
</dbReference>
<dbReference type="SUPFAM" id="SSF63562">
    <property type="entry name" value="RPB6/omega subunit-like"/>
    <property type="match status" value="1"/>
</dbReference>
<evidence type="ECO:0000255" key="1">
    <source>
        <dbReference type="HAMAP-Rule" id="MF_00366"/>
    </source>
</evidence>
<evidence type="ECO:0000256" key="2">
    <source>
        <dbReference type="SAM" id="MobiDB-lite"/>
    </source>
</evidence>
<accession>Q2GKJ2</accession>
<proteinExistence type="inferred from homology"/>
<protein>
    <recommendedName>
        <fullName evidence="1">DNA-directed RNA polymerase subunit omega</fullName>
        <shortName evidence="1">RNAP omega subunit</shortName>
        <ecNumber evidence="1">2.7.7.6</ecNumber>
    </recommendedName>
    <alternativeName>
        <fullName evidence="1">RNA polymerase omega subunit</fullName>
    </alternativeName>
    <alternativeName>
        <fullName evidence="1">Transcriptase subunit omega</fullName>
    </alternativeName>
</protein>
<comment type="function">
    <text evidence="1">Promotes RNA polymerase assembly. Latches the N- and C-terminal regions of the beta' subunit thereby facilitating its interaction with the beta and alpha subunits.</text>
</comment>
<comment type="catalytic activity">
    <reaction evidence="1">
        <text>RNA(n) + a ribonucleoside 5'-triphosphate = RNA(n+1) + diphosphate</text>
        <dbReference type="Rhea" id="RHEA:21248"/>
        <dbReference type="Rhea" id="RHEA-COMP:14527"/>
        <dbReference type="Rhea" id="RHEA-COMP:17342"/>
        <dbReference type="ChEBI" id="CHEBI:33019"/>
        <dbReference type="ChEBI" id="CHEBI:61557"/>
        <dbReference type="ChEBI" id="CHEBI:140395"/>
        <dbReference type="EC" id="2.7.7.6"/>
    </reaction>
</comment>
<comment type="subunit">
    <text evidence="1">The RNAP catalytic core consists of 2 alpha, 1 beta, 1 beta' and 1 omega subunit. When a sigma factor is associated with the core the holoenzyme is formed, which can initiate transcription.</text>
</comment>
<comment type="similarity">
    <text evidence="1">Belongs to the RNA polymerase subunit omega family.</text>
</comment>
<feature type="chain" id="PRO_0000237429" description="DNA-directed RNA polymerase subunit omega">
    <location>
        <begin position="1"/>
        <end position="135"/>
    </location>
</feature>
<feature type="region of interest" description="Disordered" evidence="2">
    <location>
        <begin position="84"/>
        <end position="106"/>
    </location>
</feature>
<gene>
    <name evidence="1" type="primary">rpoZ</name>
    <name type="ordered locus">APH_0514</name>
</gene>
<keyword id="KW-0240">DNA-directed RNA polymerase</keyword>
<keyword id="KW-0548">Nucleotidyltransferase</keyword>
<keyword id="KW-0804">Transcription</keyword>
<keyword id="KW-0808">Transferase</keyword>
<organism>
    <name type="scientific">Anaplasma phagocytophilum (strain HZ)</name>
    <dbReference type="NCBI Taxonomy" id="212042"/>
    <lineage>
        <taxon>Bacteria</taxon>
        <taxon>Pseudomonadati</taxon>
        <taxon>Pseudomonadota</taxon>
        <taxon>Alphaproteobacteria</taxon>
        <taxon>Rickettsiales</taxon>
        <taxon>Anaplasmataceae</taxon>
        <taxon>Anaplasma</taxon>
        <taxon>phagocytophilum group</taxon>
    </lineage>
</organism>